<name>Y2182_ERWT9</name>
<feature type="chain" id="PRO_1000135186" description="Putative transport protein ETA_21820">
    <location>
        <begin position="1"/>
        <end position="562"/>
    </location>
</feature>
<feature type="transmembrane region" description="Helical" evidence="1">
    <location>
        <begin position="8"/>
        <end position="28"/>
    </location>
</feature>
<feature type="transmembrane region" description="Helical" evidence="1">
    <location>
        <begin position="32"/>
        <end position="52"/>
    </location>
</feature>
<feature type="transmembrane region" description="Helical" evidence="1">
    <location>
        <begin position="66"/>
        <end position="86"/>
    </location>
</feature>
<feature type="transmembrane region" description="Helical" evidence="1">
    <location>
        <begin position="94"/>
        <end position="114"/>
    </location>
</feature>
<feature type="transmembrane region" description="Helical" evidence="1">
    <location>
        <begin position="158"/>
        <end position="178"/>
    </location>
</feature>
<feature type="transmembrane region" description="Helical" evidence="1">
    <location>
        <begin position="383"/>
        <end position="403"/>
    </location>
</feature>
<feature type="transmembrane region" description="Helical" evidence="1">
    <location>
        <begin position="406"/>
        <end position="426"/>
    </location>
</feature>
<feature type="transmembrane region" description="Helical" evidence="1">
    <location>
        <begin position="440"/>
        <end position="460"/>
    </location>
</feature>
<feature type="transmembrane region" description="Helical" evidence="1">
    <location>
        <begin position="473"/>
        <end position="493"/>
    </location>
</feature>
<feature type="transmembrane region" description="Helical" evidence="1">
    <location>
        <begin position="503"/>
        <end position="523"/>
    </location>
</feature>
<feature type="transmembrane region" description="Helical" evidence="1">
    <location>
        <begin position="540"/>
        <end position="560"/>
    </location>
</feature>
<feature type="domain" description="RCK C-terminal 1" evidence="1">
    <location>
        <begin position="202"/>
        <end position="288"/>
    </location>
</feature>
<feature type="domain" description="RCK C-terminal 2" evidence="1">
    <location>
        <begin position="290"/>
        <end position="373"/>
    </location>
</feature>
<reference key="1">
    <citation type="journal article" date="2008" name="Environ. Microbiol.">
        <title>The genome of Erwinia tasmaniensis strain Et1/99, a non-pathogenic bacterium in the genus Erwinia.</title>
        <authorList>
            <person name="Kube M."/>
            <person name="Migdoll A.M."/>
            <person name="Mueller I."/>
            <person name="Kuhl H."/>
            <person name="Beck A."/>
            <person name="Reinhardt R."/>
            <person name="Geider K."/>
        </authorList>
    </citation>
    <scope>NUCLEOTIDE SEQUENCE [LARGE SCALE GENOMIC DNA]</scope>
    <source>
        <strain>DSM 17950 / CFBP 7177 / CIP 109463 / NCPPB 4357 / Et1/99</strain>
    </source>
</reference>
<organism>
    <name type="scientific">Erwinia tasmaniensis (strain DSM 17950 / CFBP 7177 / CIP 109463 / NCPPB 4357 / Et1/99)</name>
    <dbReference type="NCBI Taxonomy" id="465817"/>
    <lineage>
        <taxon>Bacteria</taxon>
        <taxon>Pseudomonadati</taxon>
        <taxon>Pseudomonadota</taxon>
        <taxon>Gammaproteobacteria</taxon>
        <taxon>Enterobacterales</taxon>
        <taxon>Erwiniaceae</taxon>
        <taxon>Erwinia</taxon>
    </lineage>
</organism>
<dbReference type="EMBL" id="CU468135">
    <property type="protein sequence ID" value="CAO97228.1"/>
    <property type="molecule type" value="Genomic_DNA"/>
</dbReference>
<dbReference type="RefSeq" id="WP_012441897.1">
    <property type="nucleotide sequence ID" value="NC_010694.1"/>
</dbReference>
<dbReference type="SMR" id="B2VC50"/>
<dbReference type="STRING" id="465817.ETA_21820"/>
<dbReference type="KEGG" id="eta:ETA_21820"/>
<dbReference type="eggNOG" id="COG0569">
    <property type="taxonomic scope" value="Bacteria"/>
</dbReference>
<dbReference type="eggNOG" id="COG2985">
    <property type="taxonomic scope" value="Bacteria"/>
</dbReference>
<dbReference type="HOGENOM" id="CLU_035023_2_2_6"/>
<dbReference type="OrthoDB" id="5166626at2"/>
<dbReference type="Proteomes" id="UP000001726">
    <property type="component" value="Chromosome"/>
</dbReference>
<dbReference type="GO" id="GO:0005886">
    <property type="term" value="C:plasma membrane"/>
    <property type="evidence" value="ECO:0007669"/>
    <property type="project" value="UniProtKB-SubCell"/>
</dbReference>
<dbReference type="GO" id="GO:0008324">
    <property type="term" value="F:monoatomic cation transmembrane transporter activity"/>
    <property type="evidence" value="ECO:0007669"/>
    <property type="project" value="InterPro"/>
</dbReference>
<dbReference type="GO" id="GO:0006813">
    <property type="term" value="P:potassium ion transport"/>
    <property type="evidence" value="ECO:0007669"/>
    <property type="project" value="InterPro"/>
</dbReference>
<dbReference type="FunFam" id="3.30.70.1450:FF:000003">
    <property type="entry name" value="Putative transport protein YbjL"/>
    <property type="match status" value="1"/>
</dbReference>
<dbReference type="Gene3D" id="3.30.70.1450">
    <property type="entry name" value="Regulator of K+ conductance, C-terminal domain"/>
    <property type="match status" value="1"/>
</dbReference>
<dbReference type="HAMAP" id="MF_01015">
    <property type="entry name" value="YbjL"/>
    <property type="match status" value="1"/>
</dbReference>
<dbReference type="InterPro" id="IPR050144">
    <property type="entry name" value="AAE_transporter"/>
</dbReference>
<dbReference type="InterPro" id="IPR006037">
    <property type="entry name" value="RCK_C"/>
</dbReference>
<dbReference type="InterPro" id="IPR036721">
    <property type="entry name" value="RCK_C_sf"/>
</dbReference>
<dbReference type="InterPro" id="IPR023017">
    <property type="entry name" value="Transp_YbjL_put"/>
</dbReference>
<dbReference type="InterPro" id="IPR006512">
    <property type="entry name" value="YidE_YbjL"/>
</dbReference>
<dbReference type="NCBIfam" id="NF003440">
    <property type="entry name" value="PRK04972.1"/>
    <property type="match status" value="1"/>
</dbReference>
<dbReference type="NCBIfam" id="TIGR01625">
    <property type="entry name" value="YidE_YbjL_dupl"/>
    <property type="match status" value="2"/>
</dbReference>
<dbReference type="PANTHER" id="PTHR30445">
    <property type="entry name" value="K(+)_H(+) ANTIPORTER SUBUNIT KHTT"/>
    <property type="match status" value="1"/>
</dbReference>
<dbReference type="PANTHER" id="PTHR30445:SF10">
    <property type="entry name" value="TRANSPORT PROTEIN YBJL-RELATED"/>
    <property type="match status" value="1"/>
</dbReference>
<dbReference type="Pfam" id="PF06826">
    <property type="entry name" value="Asp-Al_Ex"/>
    <property type="match status" value="2"/>
</dbReference>
<dbReference type="Pfam" id="PF02080">
    <property type="entry name" value="TrkA_C"/>
    <property type="match status" value="2"/>
</dbReference>
<dbReference type="SUPFAM" id="SSF116726">
    <property type="entry name" value="TrkA C-terminal domain-like"/>
    <property type="match status" value="2"/>
</dbReference>
<dbReference type="PROSITE" id="PS51202">
    <property type="entry name" value="RCK_C"/>
    <property type="match status" value="2"/>
</dbReference>
<protein>
    <recommendedName>
        <fullName evidence="1">Putative transport protein ETA_21820</fullName>
    </recommendedName>
</protein>
<accession>B2VC50</accession>
<sequence length="562" mass="60549">MNINVADLLIGNHILLLFVVLALGLCLGKLRLGSVQLGNSIGVLVVSLLLGQQHFSINTDALNLGFMLFIFCVGVEAGPNFFSIFFRDGKNYLMLAIVMVSSAMVLALGLGKLFGWDIGLTAGMLAGSMTSTPVLVGAGDTLRQTLTDGKSLSLAQDHLSLGYALTYLVGLVSLIFGARYLPKLQHQDLPTSAQQIARERGLDPDSKRKVYLPVIRAYRVGPELVAWSDGKNLRELGIYRQTGCYIERIRRNGILASPDGDAVLQPGDEISLVGYPDAHARLDPSFRNGKEVFDRDLLDMRIVNEEIVVKNNNAVNRRLSQLKLTDHGCFLNRVIRSQIEMPIDESIILNKGDVLHISGEARRVKSVADRIGFISIHSQVTDLLAFCAFFILGLMIGMITFQFSNFNFGIGNAAGLLFAGIMLGFLRANHPTFGYIPQGALTMVKEFGLMVFMAGVGLSAGSGITKGLGETGLLMLGAGLIVSLVPVVICFLFGAWVLKMNRALLFGAIMGARTCAPAMEIISDTARSNIPALGYAGTYAIANVLLTLAGTLIVIIWPILGG</sequence>
<gene>
    <name type="ordered locus">ETA_21820</name>
</gene>
<comment type="subcellular location">
    <subcellularLocation>
        <location evidence="1">Cell membrane</location>
        <topology evidence="1">Multi-pass membrane protein</topology>
    </subcellularLocation>
</comment>
<comment type="similarity">
    <text evidence="1">Belongs to the AAE transporter (TC 2.A.81) family. YbjL subfamily.</text>
</comment>
<keyword id="KW-1003">Cell membrane</keyword>
<keyword id="KW-0472">Membrane</keyword>
<keyword id="KW-1185">Reference proteome</keyword>
<keyword id="KW-0677">Repeat</keyword>
<keyword id="KW-0812">Transmembrane</keyword>
<keyword id="KW-1133">Transmembrane helix</keyword>
<keyword id="KW-0813">Transport</keyword>
<evidence type="ECO:0000255" key="1">
    <source>
        <dbReference type="HAMAP-Rule" id="MF_01015"/>
    </source>
</evidence>
<proteinExistence type="inferred from homology"/>